<dbReference type="EMBL" id="CP000097">
    <property type="protein sequence ID" value="ABB24994.1"/>
    <property type="molecule type" value="Genomic_DNA"/>
</dbReference>
<dbReference type="RefSeq" id="WP_011358864.1">
    <property type="nucleotide sequence ID" value="NC_007513.1"/>
</dbReference>
<dbReference type="SMR" id="Q3B0Y4"/>
<dbReference type="STRING" id="316279.Syncc9902_0019"/>
<dbReference type="KEGG" id="sye:Syncc9902_0019"/>
<dbReference type="eggNOG" id="COG0576">
    <property type="taxonomic scope" value="Bacteria"/>
</dbReference>
<dbReference type="HOGENOM" id="CLU_057217_5_1_3"/>
<dbReference type="OrthoDB" id="9812586at2"/>
<dbReference type="Proteomes" id="UP000002712">
    <property type="component" value="Chromosome"/>
</dbReference>
<dbReference type="GO" id="GO:0005737">
    <property type="term" value="C:cytoplasm"/>
    <property type="evidence" value="ECO:0007669"/>
    <property type="project" value="UniProtKB-SubCell"/>
</dbReference>
<dbReference type="GO" id="GO:0000774">
    <property type="term" value="F:adenyl-nucleotide exchange factor activity"/>
    <property type="evidence" value="ECO:0007669"/>
    <property type="project" value="InterPro"/>
</dbReference>
<dbReference type="GO" id="GO:0042803">
    <property type="term" value="F:protein homodimerization activity"/>
    <property type="evidence" value="ECO:0007669"/>
    <property type="project" value="InterPro"/>
</dbReference>
<dbReference type="GO" id="GO:0051087">
    <property type="term" value="F:protein-folding chaperone binding"/>
    <property type="evidence" value="ECO:0007669"/>
    <property type="project" value="InterPro"/>
</dbReference>
<dbReference type="GO" id="GO:0051082">
    <property type="term" value="F:unfolded protein binding"/>
    <property type="evidence" value="ECO:0007669"/>
    <property type="project" value="TreeGrafter"/>
</dbReference>
<dbReference type="GO" id="GO:0006457">
    <property type="term" value="P:protein folding"/>
    <property type="evidence" value="ECO:0007669"/>
    <property type="project" value="InterPro"/>
</dbReference>
<dbReference type="CDD" id="cd00446">
    <property type="entry name" value="GrpE"/>
    <property type="match status" value="1"/>
</dbReference>
<dbReference type="FunFam" id="2.30.22.10:FF:000001">
    <property type="entry name" value="Protein GrpE"/>
    <property type="match status" value="1"/>
</dbReference>
<dbReference type="Gene3D" id="3.90.20.20">
    <property type="match status" value="1"/>
</dbReference>
<dbReference type="Gene3D" id="2.30.22.10">
    <property type="entry name" value="Head domain of nucleotide exchange factor GrpE"/>
    <property type="match status" value="1"/>
</dbReference>
<dbReference type="HAMAP" id="MF_01151">
    <property type="entry name" value="GrpE"/>
    <property type="match status" value="1"/>
</dbReference>
<dbReference type="InterPro" id="IPR000740">
    <property type="entry name" value="GrpE"/>
</dbReference>
<dbReference type="InterPro" id="IPR013805">
    <property type="entry name" value="GrpE_coiled_coil"/>
</dbReference>
<dbReference type="InterPro" id="IPR009012">
    <property type="entry name" value="GrpE_head"/>
</dbReference>
<dbReference type="NCBIfam" id="NF010738">
    <property type="entry name" value="PRK14140.1"/>
    <property type="match status" value="1"/>
</dbReference>
<dbReference type="NCBIfam" id="NF010741">
    <property type="entry name" value="PRK14143.1"/>
    <property type="match status" value="1"/>
</dbReference>
<dbReference type="PANTHER" id="PTHR21237">
    <property type="entry name" value="GRPE PROTEIN"/>
    <property type="match status" value="1"/>
</dbReference>
<dbReference type="PANTHER" id="PTHR21237:SF23">
    <property type="entry name" value="GRPE PROTEIN HOMOLOG, MITOCHONDRIAL"/>
    <property type="match status" value="1"/>
</dbReference>
<dbReference type="Pfam" id="PF01025">
    <property type="entry name" value="GrpE"/>
    <property type="match status" value="1"/>
</dbReference>
<dbReference type="PRINTS" id="PR00773">
    <property type="entry name" value="GRPEPROTEIN"/>
</dbReference>
<dbReference type="SUPFAM" id="SSF58014">
    <property type="entry name" value="Coiled-coil domain of nucleotide exchange factor GrpE"/>
    <property type="match status" value="1"/>
</dbReference>
<dbReference type="SUPFAM" id="SSF51064">
    <property type="entry name" value="Head domain of nucleotide exchange factor GrpE"/>
    <property type="match status" value="1"/>
</dbReference>
<dbReference type="PROSITE" id="PS01071">
    <property type="entry name" value="GRPE"/>
    <property type="match status" value="1"/>
</dbReference>
<accession>Q3B0Y4</accession>
<comment type="function">
    <text evidence="1">Participates actively in the response to hyperosmotic and heat shock by preventing the aggregation of stress-denatured proteins, in association with DnaK and GrpE. It is the nucleotide exchange factor for DnaK and may function as a thermosensor. Unfolded proteins bind initially to DnaJ; upon interaction with the DnaJ-bound protein, DnaK hydrolyzes its bound ATP, resulting in the formation of a stable complex. GrpE releases ADP from DnaK; ATP binding to DnaK triggers the release of the substrate protein, thus completing the reaction cycle. Several rounds of ATP-dependent interactions between DnaJ, DnaK and GrpE are required for fully efficient folding.</text>
</comment>
<comment type="subunit">
    <text evidence="1">Homodimer.</text>
</comment>
<comment type="subcellular location">
    <subcellularLocation>
        <location evidence="1">Cytoplasm</location>
    </subcellularLocation>
</comment>
<comment type="similarity">
    <text evidence="1">Belongs to the GrpE family.</text>
</comment>
<proteinExistence type="inferred from homology"/>
<reference key="1">
    <citation type="submission" date="2005-08" db="EMBL/GenBank/DDBJ databases">
        <title>Complete sequence of Synechococcus sp. CC9902.</title>
        <authorList>
            <person name="Copeland A."/>
            <person name="Lucas S."/>
            <person name="Lapidus A."/>
            <person name="Barry K."/>
            <person name="Detter J.C."/>
            <person name="Glavina T."/>
            <person name="Hammon N."/>
            <person name="Israni S."/>
            <person name="Pitluck S."/>
            <person name="Martinez M."/>
            <person name="Schmutz J."/>
            <person name="Larimer F."/>
            <person name="Land M."/>
            <person name="Kyrpides N."/>
            <person name="Ivanova N."/>
            <person name="Richardson P."/>
        </authorList>
    </citation>
    <scope>NUCLEOTIDE SEQUENCE [LARGE SCALE GENOMIC DNA]</scope>
    <source>
        <strain>CC9902</strain>
    </source>
</reference>
<name>GRPE_SYNS9</name>
<protein>
    <recommendedName>
        <fullName evidence="1">Protein GrpE</fullName>
    </recommendedName>
    <alternativeName>
        <fullName evidence="1">HSP-70 cofactor</fullName>
    </alternativeName>
</protein>
<gene>
    <name evidence="1" type="primary">grpE</name>
    <name type="ordered locus">Syncc9902_0019</name>
</gene>
<feature type="chain" id="PRO_1000053656" description="Protein GrpE">
    <location>
        <begin position="1"/>
        <end position="224"/>
    </location>
</feature>
<feature type="region of interest" description="Disordered" evidence="2">
    <location>
        <begin position="1"/>
        <end position="35"/>
    </location>
</feature>
<feature type="region of interest" description="Disordered" evidence="2">
    <location>
        <begin position="203"/>
        <end position="224"/>
    </location>
</feature>
<feature type="compositionally biased region" description="Polar residues" evidence="2">
    <location>
        <begin position="1"/>
        <end position="16"/>
    </location>
</feature>
<feature type="compositionally biased region" description="Polar residues" evidence="2">
    <location>
        <begin position="209"/>
        <end position="224"/>
    </location>
</feature>
<sequence length="224" mass="25129">MSGDASTSAQDQNVESNDVPAIPDVDAGTPIDPVVEETPTLDTEIDPANRLQQLEQELNSLKQEHEAVQSQYMRIAADFDNFRKRQARDQDDLRQQLVCSTLTEILPVVDNFERARQQLNPEGEEAQALHRSYQGLYKQLVDVLKQQGVARMEVVGQEFDPTLHEAVLREENQEHAEDIVCEELQRGYHRDGRVLRHAMVKVSMGPGPESSSDAASEQPQEGDA</sequence>
<evidence type="ECO:0000255" key="1">
    <source>
        <dbReference type="HAMAP-Rule" id="MF_01151"/>
    </source>
</evidence>
<evidence type="ECO:0000256" key="2">
    <source>
        <dbReference type="SAM" id="MobiDB-lite"/>
    </source>
</evidence>
<keyword id="KW-0143">Chaperone</keyword>
<keyword id="KW-0963">Cytoplasm</keyword>
<keyword id="KW-1185">Reference proteome</keyword>
<keyword id="KW-0346">Stress response</keyword>
<organism>
    <name type="scientific">Synechococcus sp. (strain CC9902)</name>
    <dbReference type="NCBI Taxonomy" id="316279"/>
    <lineage>
        <taxon>Bacteria</taxon>
        <taxon>Bacillati</taxon>
        <taxon>Cyanobacteriota</taxon>
        <taxon>Cyanophyceae</taxon>
        <taxon>Synechococcales</taxon>
        <taxon>Synechococcaceae</taxon>
        <taxon>Synechococcus</taxon>
    </lineage>
</organism>